<comment type="function">
    <text evidence="1">May be involved in protein secretion and Golgi organization.</text>
</comment>
<comment type="subcellular location">
    <subcellularLocation>
        <location evidence="1">Cytoplasm</location>
    </subcellularLocation>
    <subcellularLocation>
        <location evidence="1">Golgi apparatus</location>
    </subcellularLocation>
</comment>
<comment type="similarity">
    <text evidence="2">Belongs to the Tango6 family.</text>
</comment>
<feature type="chain" id="PRO_0000421300" description="Transport and Golgi organization protein 6">
    <location>
        <begin position="1"/>
        <end position="921"/>
    </location>
</feature>
<sequence length="921" mass="105204">MINTAKYFALLESLRFSKALANTANNSGTAEALEINLRILEKYAKLEIGQQLHELCLEYQLTDDHESSIDPDSDRTICYIIRLQHVLHSIMRNINFHSDAKEDLISVAHLKLCIQASQELSYYSLRCQLHEDFYKSPIFCEAQGKIKANFSLMLLSIQFFINLLHIRQYHIANSMELVQRDLLAAIVSLRVQQDSPLLDKAIAYLWQYESKADFFRNILLFKATTLCPTLAQLLHRQLLGKLHLPQGFASLVEALHQNPNVNSSRNAEIVASIVARKGFSQLAQEKMVLQVLEYCKFYLQNADKMCAGVLSLRRLYDLSDTNQKLIKEILFKHWETLCNPEDIINGLILMDHQELCNRILLWQHLFCSSTVACLPSNLLVPYLPLLLQLYDGLPMELPASSQISAIILRCLDNREMKNELPAILQKLFKWEIEKEPPWKCLNPRIIILPSMNTTQIQVKVAHKDHLADHDMGRILPGLLTSSSHHSLTCKVFLSLLGFIAKQINDKSSASVDFISSEAELKDFLHSKYQLKLDLLIALNQMVAHQPLRAQLSQHTKELLHILKDLLVHRSREQDTTDQILLLVLNLLQEILEGSENIQLSEACKELKEQLHLLGTRSSNPLIQQSVKSLLTIIHGAWRPSEAVKIQPFQRARSLIEEKQSHMQVYGIQMMIDLLKKRDPATLAQGQLIIALALTTLKDKESYTFLNCVRLFVSLVHVMESDVLDKLSDEYLSETAHLDYRLVVGEAILKVAQELGPLCFRYKAVLLNCFMYGSRSPVHEFRMSAFANLAQLCRLLAFQVQNFFHELLQLVNSELTTGGYVPSKRAAVLVLAELLNGMENLLDYQEMLLPIYRLLKAIEADESCDPQMRQHAANGLKILNKKCTKLIQSALEEKSLQKQIKVLGIKDDDSPQRRNRHILELN</sequence>
<organism>
    <name type="scientific">Drosophila melanogaster</name>
    <name type="common">Fruit fly</name>
    <dbReference type="NCBI Taxonomy" id="7227"/>
    <lineage>
        <taxon>Eukaryota</taxon>
        <taxon>Metazoa</taxon>
        <taxon>Ecdysozoa</taxon>
        <taxon>Arthropoda</taxon>
        <taxon>Hexapoda</taxon>
        <taxon>Insecta</taxon>
        <taxon>Pterygota</taxon>
        <taxon>Neoptera</taxon>
        <taxon>Endopterygota</taxon>
        <taxon>Diptera</taxon>
        <taxon>Brachycera</taxon>
        <taxon>Muscomorpha</taxon>
        <taxon>Ephydroidea</taxon>
        <taxon>Drosophilidae</taxon>
        <taxon>Drosophila</taxon>
        <taxon>Sophophora</taxon>
    </lineage>
</organism>
<protein>
    <recommendedName>
        <fullName>Transport and Golgi organization protein 6</fullName>
    </recommendedName>
</protein>
<reference key="1">
    <citation type="journal article" date="2000" name="Science">
        <title>The genome sequence of Drosophila melanogaster.</title>
        <authorList>
            <person name="Adams M.D."/>
            <person name="Celniker S.E."/>
            <person name="Holt R.A."/>
            <person name="Evans C.A."/>
            <person name="Gocayne J.D."/>
            <person name="Amanatides P.G."/>
            <person name="Scherer S.E."/>
            <person name="Li P.W."/>
            <person name="Hoskins R.A."/>
            <person name="Galle R.F."/>
            <person name="George R.A."/>
            <person name="Lewis S.E."/>
            <person name="Richards S."/>
            <person name="Ashburner M."/>
            <person name="Henderson S.N."/>
            <person name="Sutton G.G."/>
            <person name="Wortman J.R."/>
            <person name="Yandell M.D."/>
            <person name="Zhang Q."/>
            <person name="Chen L.X."/>
            <person name="Brandon R.C."/>
            <person name="Rogers Y.-H.C."/>
            <person name="Blazej R.G."/>
            <person name="Champe M."/>
            <person name="Pfeiffer B.D."/>
            <person name="Wan K.H."/>
            <person name="Doyle C."/>
            <person name="Baxter E.G."/>
            <person name="Helt G."/>
            <person name="Nelson C.R."/>
            <person name="Miklos G.L.G."/>
            <person name="Abril J.F."/>
            <person name="Agbayani A."/>
            <person name="An H.-J."/>
            <person name="Andrews-Pfannkoch C."/>
            <person name="Baldwin D."/>
            <person name="Ballew R.M."/>
            <person name="Basu A."/>
            <person name="Baxendale J."/>
            <person name="Bayraktaroglu L."/>
            <person name="Beasley E.M."/>
            <person name="Beeson K.Y."/>
            <person name="Benos P.V."/>
            <person name="Berman B.P."/>
            <person name="Bhandari D."/>
            <person name="Bolshakov S."/>
            <person name="Borkova D."/>
            <person name="Botchan M.R."/>
            <person name="Bouck J."/>
            <person name="Brokstein P."/>
            <person name="Brottier P."/>
            <person name="Burtis K.C."/>
            <person name="Busam D.A."/>
            <person name="Butler H."/>
            <person name="Cadieu E."/>
            <person name="Center A."/>
            <person name="Chandra I."/>
            <person name="Cherry J.M."/>
            <person name="Cawley S."/>
            <person name="Dahlke C."/>
            <person name="Davenport L.B."/>
            <person name="Davies P."/>
            <person name="de Pablos B."/>
            <person name="Delcher A."/>
            <person name="Deng Z."/>
            <person name="Mays A.D."/>
            <person name="Dew I."/>
            <person name="Dietz S.M."/>
            <person name="Dodson K."/>
            <person name="Doup L.E."/>
            <person name="Downes M."/>
            <person name="Dugan-Rocha S."/>
            <person name="Dunkov B.C."/>
            <person name="Dunn P."/>
            <person name="Durbin K.J."/>
            <person name="Evangelista C.C."/>
            <person name="Ferraz C."/>
            <person name="Ferriera S."/>
            <person name="Fleischmann W."/>
            <person name="Fosler C."/>
            <person name="Gabrielian A.E."/>
            <person name="Garg N.S."/>
            <person name="Gelbart W.M."/>
            <person name="Glasser K."/>
            <person name="Glodek A."/>
            <person name="Gong F."/>
            <person name="Gorrell J.H."/>
            <person name="Gu Z."/>
            <person name="Guan P."/>
            <person name="Harris M."/>
            <person name="Harris N.L."/>
            <person name="Harvey D.A."/>
            <person name="Heiman T.J."/>
            <person name="Hernandez J.R."/>
            <person name="Houck J."/>
            <person name="Hostin D."/>
            <person name="Houston K.A."/>
            <person name="Howland T.J."/>
            <person name="Wei M.-H."/>
            <person name="Ibegwam C."/>
            <person name="Jalali M."/>
            <person name="Kalush F."/>
            <person name="Karpen G.H."/>
            <person name="Ke Z."/>
            <person name="Kennison J.A."/>
            <person name="Ketchum K.A."/>
            <person name="Kimmel B.E."/>
            <person name="Kodira C.D."/>
            <person name="Kraft C.L."/>
            <person name="Kravitz S."/>
            <person name="Kulp D."/>
            <person name="Lai Z."/>
            <person name="Lasko P."/>
            <person name="Lei Y."/>
            <person name="Levitsky A.A."/>
            <person name="Li J.H."/>
            <person name="Li Z."/>
            <person name="Liang Y."/>
            <person name="Lin X."/>
            <person name="Liu X."/>
            <person name="Mattei B."/>
            <person name="McIntosh T.C."/>
            <person name="McLeod M.P."/>
            <person name="McPherson D."/>
            <person name="Merkulov G."/>
            <person name="Milshina N.V."/>
            <person name="Mobarry C."/>
            <person name="Morris J."/>
            <person name="Moshrefi A."/>
            <person name="Mount S.M."/>
            <person name="Moy M."/>
            <person name="Murphy B."/>
            <person name="Murphy L."/>
            <person name="Muzny D.M."/>
            <person name="Nelson D.L."/>
            <person name="Nelson D.R."/>
            <person name="Nelson K.A."/>
            <person name="Nixon K."/>
            <person name="Nusskern D.R."/>
            <person name="Pacleb J.M."/>
            <person name="Palazzolo M."/>
            <person name="Pittman G.S."/>
            <person name="Pan S."/>
            <person name="Pollard J."/>
            <person name="Puri V."/>
            <person name="Reese M.G."/>
            <person name="Reinert K."/>
            <person name="Remington K."/>
            <person name="Saunders R.D.C."/>
            <person name="Scheeler F."/>
            <person name="Shen H."/>
            <person name="Shue B.C."/>
            <person name="Siden-Kiamos I."/>
            <person name="Simpson M."/>
            <person name="Skupski M.P."/>
            <person name="Smith T.J."/>
            <person name="Spier E."/>
            <person name="Spradling A.C."/>
            <person name="Stapleton M."/>
            <person name="Strong R."/>
            <person name="Sun E."/>
            <person name="Svirskas R."/>
            <person name="Tector C."/>
            <person name="Turner R."/>
            <person name="Venter E."/>
            <person name="Wang A.H."/>
            <person name="Wang X."/>
            <person name="Wang Z.-Y."/>
            <person name="Wassarman D.A."/>
            <person name="Weinstock G.M."/>
            <person name="Weissenbach J."/>
            <person name="Williams S.M."/>
            <person name="Woodage T."/>
            <person name="Worley K.C."/>
            <person name="Wu D."/>
            <person name="Yang S."/>
            <person name="Yao Q.A."/>
            <person name="Ye J."/>
            <person name="Yeh R.-F."/>
            <person name="Zaveri J.S."/>
            <person name="Zhan M."/>
            <person name="Zhang G."/>
            <person name="Zhao Q."/>
            <person name="Zheng L."/>
            <person name="Zheng X.H."/>
            <person name="Zhong F.N."/>
            <person name="Zhong W."/>
            <person name="Zhou X."/>
            <person name="Zhu S.C."/>
            <person name="Zhu X."/>
            <person name="Smith H.O."/>
            <person name="Gibbs R.A."/>
            <person name="Myers E.W."/>
            <person name="Rubin G.M."/>
            <person name="Venter J.C."/>
        </authorList>
    </citation>
    <scope>NUCLEOTIDE SEQUENCE [LARGE SCALE GENOMIC DNA]</scope>
    <source>
        <strain>Berkeley</strain>
    </source>
</reference>
<reference key="2">
    <citation type="journal article" date="2002" name="Genome Biol.">
        <title>Annotation of the Drosophila melanogaster euchromatic genome: a systematic review.</title>
        <authorList>
            <person name="Misra S."/>
            <person name="Crosby M.A."/>
            <person name="Mungall C.J."/>
            <person name="Matthews B.B."/>
            <person name="Campbell K.S."/>
            <person name="Hradecky P."/>
            <person name="Huang Y."/>
            <person name="Kaminker J.S."/>
            <person name="Millburn G.H."/>
            <person name="Prochnik S.E."/>
            <person name="Smith C.D."/>
            <person name="Tupy J.L."/>
            <person name="Whitfield E.J."/>
            <person name="Bayraktaroglu L."/>
            <person name="Berman B.P."/>
            <person name="Bettencourt B.R."/>
            <person name="Celniker S.E."/>
            <person name="de Grey A.D.N.J."/>
            <person name="Drysdale R.A."/>
            <person name="Harris N.L."/>
            <person name="Richter J."/>
            <person name="Russo S."/>
            <person name="Schroeder A.J."/>
            <person name="Shu S.Q."/>
            <person name="Stapleton M."/>
            <person name="Yamada C."/>
            <person name="Ashburner M."/>
            <person name="Gelbart W.M."/>
            <person name="Rubin G.M."/>
            <person name="Lewis S.E."/>
        </authorList>
    </citation>
    <scope>GENOME REANNOTATION</scope>
    <source>
        <strain>Berkeley</strain>
    </source>
</reference>
<reference key="3">
    <citation type="journal article" date="2002" name="Genome Biol.">
        <title>A Drosophila full-length cDNA resource.</title>
        <authorList>
            <person name="Stapleton M."/>
            <person name="Carlson J.W."/>
            <person name="Brokstein P."/>
            <person name="Yu C."/>
            <person name="Champe M."/>
            <person name="George R.A."/>
            <person name="Guarin H."/>
            <person name="Kronmiller B."/>
            <person name="Pacleb J.M."/>
            <person name="Park S."/>
            <person name="Wan K.H."/>
            <person name="Rubin G.M."/>
            <person name="Celniker S.E."/>
        </authorList>
    </citation>
    <scope>NUCLEOTIDE SEQUENCE [LARGE SCALE MRNA]</scope>
    <source>
        <strain>Berkeley</strain>
    </source>
</reference>
<reference key="4">
    <citation type="journal article" date="2006" name="Nature">
        <title>Functional genomics reveals genes involved in protein secretion and Golgi organization.</title>
        <authorList>
            <person name="Bard F."/>
            <person name="Casano L."/>
            <person name="Mallabiabarrena A."/>
            <person name="Wallace E."/>
            <person name="Saito K."/>
            <person name="Kitayama H."/>
            <person name="Guizzunti G."/>
            <person name="Hu Y."/>
            <person name="Wendler F."/>
            <person name="Dasgupta R."/>
            <person name="Perrimon N."/>
            <person name="Malhotra V."/>
        </authorList>
    </citation>
    <scope>FUNCTION</scope>
    <scope>SUBCELLULAR LOCATION</scope>
</reference>
<gene>
    <name type="primary">Tango6</name>
    <name type="ORF">CG18398</name>
</gene>
<accession>Q9VJ29</accession>
<keyword id="KW-0963">Cytoplasm</keyword>
<keyword id="KW-0333">Golgi apparatus</keyword>
<keyword id="KW-1185">Reference proteome</keyword>
<dbReference type="EMBL" id="BT016081">
    <property type="protein sequence ID" value="AAV36966.1"/>
    <property type="molecule type" value="mRNA"/>
</dbReference>
<dbReference type="EMBL" id="AE014134">
    <property type="protein sequence ID" value="AAF53728.1"/>
    <property type="molecule type" value="Genomic_DNA"/>
</dbReference>
<dbReference type="RefSeq" id="NP_609922.2">
    <property type="nucleotide sequence ID" value="NM_136078.4"/>
</dbReference>
<dbReference type="SMR" id="Q9VJ29"/>
<dbReference type="BioGRID" id="61146">
    <property type="interactions" value="18"/>
</dbReference>
<dbReference type="FunCoup" id="Q9VJ29">
    <property type="interactions" value="55"/>
</dbReference>
<dbReference type="IntAct" id="Q9VJ29">
    <property type="interactions" value="1"/>
</dbReference>
<dbReference type="STRING" id="7227.FBpp0080677"/>
<dbReference type="PaxDb" id="7227-FBpp0080677"/>
<dbReference type="EnsemblMetazoa" id="FBtr0081133">
    <property type="protein sequence ID" value="FBpp0080677"/>
    <property type="gene ID" value="FBgn0032728"/>
</dbReference>
<dbReference type="GeneID" id="35155"/>
<dbReference type="KEGG" id="dme:Dmel_CG18398"/>
<dbReference type="UCSC" id="CG18398-RA">
    <property type="organism name" value="d. melanogaster"/>
</dbReference>
<dbReference type="AGR" id="FB:FBgn0032728"/>
<dbReference type="CTD" id="79613"/>
<dbReference type="FlyBase" id="FBgn0032728">
    <property type="gene designation" value="Tango6"/>
</dbReference>
<dbReference type="VEuPathDB" id="VectorBase:FBgn0032728"/>
<dbReference type="eggNOG" id="KOG4653">
    <property type="taxonomic scope" value="Eukaryota"/>
</dbReference>
<dbReference type="GeneTree" id="ENSGT00390000010938"/>
<dbReference type="HOGENOM" id="CLU_014339_0_0_1"/>
<dbReference type="InParanoid" id="Q9VJ29"/>
<dbReference type="OMA" id="CIQATQE"/>
<dbReference type="OrthoDB" id="39591at2759"/>
<dbReference type="PhylomeDB" id="Q9VJ29"/>
<dbReference type="SignaLink" id="Q9VJ29"/>
<dbReference type="BioGRID-ORCS" id="35155">
    <property type="hits" value="0 hits in 1 CRISPR screen"/>
</dbReference>
<dbReference type="GenomeRNAi" id="35155"/>
<dbReference type="PRO" id="PR:Q9VJ29"/>
<dbReference type="Proteomes" id="UP000000803">
    <property type="component" value="Chromosome 2L"/>
</dbReference>
<dbReference type="Bgee" id="FBgn0032728">
    <property type="expression patterns" value="Expressed in eye disc (Drosophila) and 41 other cell types or tissues"/>
</dbReference>
<dbReference type="ExpressionAtlas" id="Q9VJ29">
    <property type="expression patterns" value="baseline and differential"/>
</dbReference>
<dbReference type="GO" id="GO:0005829">
    <property type="term" value="C:cytosol"/>
    <property type="evidence" value="ECO:0000314"/>
    <property type="project" value="FlyBase"/>
</dbReference>
<dbReference type="GO" id="GO:0005794">
    <property type="term" value="C:Golgi apparatus"/>
    <property type="evidence" value="ECO:0000314"/>
    <property type="project" value="FlyBase"/>
</dbReference>
<dbReference type="GO" id="GO:0007030">
    <property type="term" value="P:Golgi organization"/>
    <property type="evidence" value="ECO:0000315"/>
    <property type="project" value="FlyBase"/>
</dbReference>
<dbReference type="GO" id="GO:0009306">
    <property type="term" value="P:protein secretion"/>
    <property type="evidence" value="ECO:0000315"/>
    <property type="project" value="FlyBase"/>
</dbReference>
<dbReference type="InterPro" id="IPR016024">
    <property type="entry name" value="ARM-type_fold"/>
</dbReference>
<dbReference type="InterPro" id="IPR019451">
    <property type="entry name" value="Rtp1_C1"/>
</dbReference>
<dbReference type="InterPro" id="IPR019414">
    <property type="entry name" value="Rtp1_C2"/>
</dbReference>
<dbReference type="InterPro" id="IPR039600">
    <property type="entry name" value="TANGO6/Rtp1"/>
</dbReference>
<dbReference type="PANTHER" id="PTHR20959">
    <property type="entry name" value="TRANSPORT AND GOLGI ORGANIZATION PROTEIN 6 FAMILY MEMBER"/>
    <property type="match status" value="1"/>
</dbReference>
<dbReference type="PANTHER" id="PTHR20959:SF1">
    <property type="entry name" value="TRANSPORT AND GOLGI ORGANIZATION PROTEIN 6 HOMOLOG"/>
    <property type="match status" value="1"/>
</dbReference>
<dbReference type="Pfam" id="PF10363">
    <property type="entry name" value="RTP1_C1"/>
    <property type="match status" value="1"/>
</dbReference>
<dbReference type="Pfam" id="PF10304">
    <property type="entry name" value="RTP1_C2"/>
    <property type="match status" value="1"/>
</dbReference>
<dbReference type="SUPFAM" id="SSF48371">
    <property type="entry name" value="ARM repeat"/>
    <property type="match status" value="1"/>
</dbReference>
<name>TNG6_DROME</name>
<evidence type="ECO:0000269" key="1">
    <source>
    </source>
</evidence>
<evidence type="ECO:0000305" key="2"/>
<proteinExistence type="evidence at transcript level"/>